<accession>Q93SH7</accession>
<accession>Q79U47</accession>
<dbReference type="EC" id="7.6.2.-" evidence="1"/>
<dbReference type="EMBL" id="AJ311165">
    <property type="protein sequence ID" value="CAC38743.1"/>
    <property type="molecule type" value="Genomic_DNA"/>
</dbReference>
<dbReference type="EMBL" id="BA000040">
    <property type="protein sequence ID" value="BAC52344.1"/>
    <property type="molecule type" value="Genomic_DNA"/>
</dbReference>
<dbReference type="RefSeq" id="NP_773719.1">
    <property type="nucleotide sequence ID" value="NC_004463.1"/>
</dbReference>
<dbReference type="RefSeq" id="WP_011089816.1">
    <property type="nucleotide sequence ID" value="NC_004463.1"/>
</dbReference>
<dbReference type="SMR" id="Q93SH7"/>
<dbReference type="FunCoup" id="Q93SH7">
    <property type="interactions" value="553"/>
</dbReference>
<dbReference type="STRING" id="224911.AAV28_33040"/>
<dbReference type="EnsemblBacteria" id="BAC52344">
    <property type="protein sequence ID" value="BAC52344"/>
    <property type="gene ID" value="BAC52344"/>
</dbReference>
<dbReference type="GeneID" id="46494044"/>
<dbReference type="KEGG" id="bja:blr7079"/>
<dbReference type="PATRIC" id="fig|224911.44.peg.7137"/>
<dbReference type="eggNOG" id="COG4559">
    <property type="taxonomic scope" value="Bacteria"/>
</dbReference>
<dbReference type="HOGENOM" id="CLU_000604_1_11_5"/>
<dbReference type="InParanoid" id="Q93SH7"/>
<dbReference type="OrthoDB" id="9810077at2"/>
<dbReference type="PhylomeDB" id="Q93SH7"/>
<dbReference type="Proteomes" id="UP000002526">
    <property type="component" value="Chromosome"/>
</dbReference>
<dbReference type="GO" id="GO:0005886">
    <property type="term" value="C:plasma membrane"/>
    <property type="evidence" value="ECO:0007669"/>
    <property type="project" value="UniProtKB-SubCell"/>
</dbReference>
<dbReference type="GO" id="GO:0005524">
    <property type="term" value="F:ATP binding"/>
    <property type="evidence" value="ECO:0007669"/>
    <property type="project" value="UniProtKB-KW"/>
</dbReference>
<dbReference type="GO" id="GO:0016887">
    <property type="term" value="F:ATP hydrolysis activity"/>
    <property type="evidence" value="ECO:0007669"/>
    <property type="project" value="InterPro"/>
</dbReference>
<dbReference type="CDD" id="cd03214">
    <property type="entry name" value="ABC_Iron-Siderophores_B12_Hemin"/>
    <property type="match status" value="1"/>
</dbReference>
<dbReference type="Gene3D" id="3.40.50.300">
    <property type="entry name" value="P-loop containing nucleotide triphosphate hydrolases"/>
    <property type="match status" value="1"/>
</dbReference>
<dbReference type="InterPro" id="IPR003593">
    <property type="entry name" value="AAA+_ATPase"/>
</dbReference>
<dbReference type="InterPro" id="IPR003439">
    <property type="entry name" value="ABC_transporter-like_ATP-bd"/>
</dbReference>
<dbReference type="InterPro" id="IPR027417">
    <property type="entry name" value="P-loop_NTPase"/>
</dbReference>
<dbReference type="NCBIfam" id="NF010068">
    <property type="entry name" value="PRK13548.1"/>
    <property type="match status" value="1"/>
</dbReference>
<dbReference type="PANTHER" id="PTHR42794">
    <property type="entry name" value="HEMIN IMPORT ATP-BINDING PROTEIN HMUV"/>
    <property type="match status" value="1"/>
</dbReference>
<dbReference type="PANTHER" id="PTHR42794:SF1">
    <property type="entry name" value="HEMIN IMPORT ATP-BINDING PROTEIN HMUV"/>
    <property type="match status" value="1"/>
</dbReference>
<dbReference type="Pfam" id="PF00005">
    <property type="entry name" value="ABC_tran"/>
    <property type="match status" value="1"/>
</dbReference>
<dbReference type="SMART" id="SM00382">
    <property type="entry name" value="AAA"/>
    <property type="match status" value="1"/>
</dbReference>
<dbReference type="SUPFAM" id="SSF52540">
    <property type="entry name" value="P-loop containing nucleoside triphosphate hydrolases"/>
    <property type="match status" value="1"/>
</dbReference>
<dbReference type="PROSITE" id="PS50893">
    <property type="entry name" value="ABC_TRANSPORTER_2"/>
    <property type="match status" value="1"/>
</dbReference>
<dbReference type="PROSITE" id="PS51261">
    <property type="entry name" value="HMUV"/>
    <property type="match status" value="1"/>
</dbReference>
<keyword id="KW-0067">ATP-binding</keyword>
<keyword id="KW-0997">Cell inner membrane</keyword>
<keyword id="KW-1003">Cell membrane</keyword>
<keyword id="KW-0472">Membrane</keyword>
<keyword id="KW-0547">Nucleotide-binding</keyword>
<keyword id="KW-1185">Reference proteome</keyword>
<keyword id="KW-1278">Translocase</keyword>
<keyword id="KW-0813">Transport</keyword>
<protein>
    <recommendedName>
        <fullName evidence="1">Hemin import ATP-binding protein HmuV</fullName>
        <ecNumber evidence="1">7.6.2.-</ecNumber>
    </recommendedName>
</protein>
<gene>
    <name evidence="1" type="primary">hmuV</name>
    <name type="ordered locus">blr7079</name>
</gene>
<feature type="chain" id="PRO_0000269580" description="Hemin import ATP-binding protein HmuV">
    <location>
        <begin position="1"/>
        <end position="268"/>
    </location>
</feature>
<feature type="domain" description="ABC transporter" evidence="1">
    <location>
        <begin position="5"/>
        <end position="242"/>
    </location>
</feature>
<feature type="binding site" evidence="1">
    <location>
        <begin position="37"/>
        <end position="44"/>
    </location>
    <ligand>
        <name>ATP</name>
        <dbReference type="ChEBI" id="CHEBI:30616"/>
    </ligand>
</feature>
<comment type="function">
    <text evidence="1">Part of the ABC transporter complex HmuTUV involved in hemin import. Responsible for energy coupling to the transport system.</text>
</comment>
<comment type="subunit">
    <text evidence="1">The complex is composed of two ATP-binding proteins (HmuV), two transmembrane proteins (HmuU) and a solute-binding protein (HmuT).</text>
</comment>
<comment type="subcellular location">
    <subcellularLocation>
        <location evidence="1">Cell inner membrane</location>
        <topology evidence="1">Peripheral membrane protein</topology>
    </subcellularLocation>
</comment>
<comment type="similarity">
    <text evidence="1">Belongs to the ABC transporter superfamily. Heme (hemin) importer (TC 3.A.1.14.5) family.</text>
</comment>
<proteinExistence type="inferred from homology"/>
<sequence>MSAVIEARHLSKRAGRAKLLDGVGLTVAAGEMVAIIGPNGAGKSTLLRLLSGDLRPSQGEVWLKQRDIGSYTPRELAARRAMLSQHINVTFPFTVEEIVLMGAGDRSAREAGRLVDAALDEVGLAHFRERQLPTLSGGEQQRAHFARVLVQLACGEAEHGPGLLLLDEPTSSLDLRHQIDLVEAARRRAGTGTAVIAILHDLNLAIRFADRLVVLSGGKLAADGPRTEVVTRETIRDIFEIDAVVHQADGVPYVLPQSMRAAASAARI</sequence>
<organism>
    <name type="scientific">Bradyrhizobium diazoefficiens (strain JCM 10833 / BCRC 13528 / IAM 13628 / NBRC 14792 / USDA 110)</name>
    <dbReference type="NCBI Taxonomy" id="224911"/>
    <lineage>
        <taxon>Bacteria</taxon>
        <taxon>Pseudomonadati</taxon>
        <taxon>Pseudomonadota</taxon>
        <taxon>Alphaproteobacteria</taxon>
        <taxon>Hyphomicrobiales</taxon>
        <taxon>Nitrobacteraceae</taxon>
        <taxon>Bradyrhizobium</taxon>
    </lineage>
</organism>
<name>HMUV_BRADU</name>
<reference key="1">
    <citation type="journal article" date="2001" name="Mol. Microbiol.">
        <title>Discovery of a haem uptake system in the soil bacterium Bradyrhizobium japonicum.</title>
        <authorList>
            <person name="Nienaber A."/>
            <person name="Hennecke H."/>
            <person name="Fischer H.-M."/>
        </authorList>
    </citation>
    <scope>NUCLEOTIDE SEQUENCE [GENOMIC DNA]</scope>
    <source>
        <strain>USDA 110spc4</strain>
    </source>
</reference>
<reference key="2">
    <citation type="journal article" date="2002" name="DNA Res.">
        <title>Complete genomic sequence of nitrogen-fixing symbiotic bacterium Bradyrhizobium japonicum USDA110.</title>
        <authorList>
            <person name="Kaneko T."/>
            <person name="Nakamura Y."/>
            <person name="Sato S."/>
            <person name="Minamisawa K."/>
            <person name="Uchiumi T."/>
            <person name="Sasamoto S."/>
            <person name="Watanabe A."/>
            <person name="Idesawa K."/>
            <person name="Iriguchi M."/>
            <person name="Kawashima K."/>
            <person name="Kohara M."/>
            <person name="Matsumoto M."/>
            <person name="Shimpo S."/>
            <person name="Tsuruoka H."/>
            <person name="Wada T."/>
            <person name="Yamada M."/>
            <person name="Tabata S."/>
        </authorList>
    </citation>
    <scope>NUCLEOTIDE SEQUENCE [LARGE SCALE GENOMIC DNA]</scope>
    <source>
        <strain>JCM 10833 / BCRC 13528 / IAM 13628 / NBRC 14792 / USDA 110</strain>
    </source>
</reference>
<evidence type="ECO:0000255" key="1">
    <source>
        <dbReference type="HAMAP-Rule" id="MF_01718"/>
    </source>
</evidence>